<name>EFTU_PARMW</name>
<keyword id="KW-0963">Cytoplasm</keyword>
<keyword id="KW-0251">Elongation factor</keyword>
<keyword id="KW-0342">GTP-binding</keyword>
<keyword id="KW-0378">Hydrolase</keyword>
<keyword id="KW-0460">Magnesium</keyword>
<keyword id="KW-0479">Metal-binding</keyword>
<keyword id="KW-0547">Nucleotide-binding</keyword>
<keyword id="KW-0648">Protein biosynthesis</keyword>
<protein>
    <recommendedName>
        <fullName evidence="2">Elongation factor Tu</fullName>
        <shortName evidence="2">EF-Tu</shortName>
        <ecNumber evidence="2">3.6.5.3</ecNumber>
    </recommendedName>
</protein>
<proteinExistence type="inferred from homology"/>
<feature type="chain" id="PRO_1000015771" description="Elongation factor Tu">
    <location>
        <begin position="1"/>
        <end position="399"/>
    </location>
</feature>
<feature type="domain" description="tr-type G">
    <location>
        <begin position="10"/>
        <end position="204"/>
    </location>
</feature>
<feature type="region of interest" description="G1" evidence="1">
    <location>
        <begin position="19"/>
        <end position="26"/>
    </location>
</feature>
<feature type="region of interest" description="G2" evidence="1">
    <location>
        <begin position="60"/>
        <end position="64"/>
    </location>
</feature>
<feature type="region of interest" description="G3" evidence="1">
    <location>
        <begin position="81"/>
        <end position="84"/>
    </location>
</feature>
<feature type="region of interest" description="G4" evidence="1">
    <location>
        <begin position="136"/>
        <end position="139"/>
    </location>
</feature>
<feature type="region of interest" description="G5" evidence="1">
    <location>
        <begin position="174"/>
        <end position="176"/>
    </location>
</feature>
<feature type="binding site" evidence="2">
    <location>
        <begin position="19"/>
        <end position="26"/>
    </location>
    <ligand>
        <name>GTP</name>
        <dbReference type="ChEBI" id="CHEBI:37565"/>
    </ligand>
</feature>
<feature type="binding site" evidence="2">
    <location>
        <position position="26"/>
    </location>
    <ligand>
        <name>Mg(2+)</name>
        <dbReference type="ChEBI" id="CHEBI:18420"/>
    </ligand>
</feature>
<feature type="binding site" evidence="2">
    <location>
        <begin position="81"/>
        <end position="85"/>
    </location>
    <ligand>
        <name>GTP</name>
        <dbReference type="ChEBI" id="CHEBI:37565"/>
    </ligand>
</feature>
<feature type="binding site" evidence="2">
    <location>
        <begin position="136"/>
        <end position="139"/>
    </location>
    <ligand>
        <name>GTP</name>
        <dbReference type="ChEBI" id="CHEBI:37565"/>
    </ligand>
</feature>
<evidence type="ECO:0000250" key="1"/>
<evidence type="ECO:0000255" key="2">
    <source>
        <dbReference type="HAMAP-Rule" id="MF_00118"/>
    </source>
</evidence>
<reference key="1">
    <citation type="journal article" date="2003" name="Nature">
        <title>The genome of a motile marine Synechococcus.</title>
        <authorList>
            <person name="Palenik B."/>
            <person name="Brahamsha B."/>
            <person name="Larimer F.W."/>
            <person name="Land M.L."/>
            <person name="Hauser L."/>
            <person name="Chain P."/>
            <person name="Lamerdin J.E."/>
            <person name="Regala W."/>
            <person name="Allen E.E."/>
            <person name="McCarren J."/>
            <person name="Paulsen I.T."/>
            <person name="Dufresne A."/>
            <person name="Partensky F."/>
            <person name="Webb E.A."/>
            <person name="Waterbury J."/>
        </authorList>
    </citation>
    <scope>NUCLEOTIDE SEQUENCE [LARGE SCALE GENOMIC DNA]</scope>
    <source>
        <strain>WH8102</strain>
    </source>
</reference>
<sequence length="399" mass="43639">MAREKFERNKPHVNIGTIGHVDHGKTTLTAAITNVLAKKGQAEKQDYADIDGAPEERERGITINTAHVEYETDTRHYAHVDCPGHADYVKNMITGAAQMDGAILVCAATDGPMAQTKEHILLAKQVGVPALVVALNKCDMVDDEEIIELVEMEVRELLDSYDFPGDDIPVVQVSGLKALEGEAEWEAKIEELMAAVDEAIPEPEREVDKPFLMAVEDVFSITGRGTVATGRIERGKVKVGEEIEIVGIKDARKTTVTGVEMFRKLLEEGMAGDNCGLLLRGIQKEDIERGMVLVKPGSITPHTKFEGEVYVLKKEEGGRHTPFFAGYRPQFYIRTTDVTGQITAFTADDGSAVEMVMPGDRIKMTGELICPVAMENGMRFAIREGGRTIGAGVVSKIIE</sequence>
<gene>
    <name evidence="2" type="primary">tuf</name>
    <name type="ordered locus">SYNW2138</name>
</gene>
<organism>
    <name type="scientific">Parasynechococcus marenigrum (strain WH8102)</name>
    <dbReference type="NCBI Taxonomy" id="84588"/>
    <lineage>
        <taxon>Bacteria</taxon>
        <taxon>Bacillati</taxon>
        <taxon>Cyanobacteriota</taxon>
        <taxon>Cyanophyceae</taxon>
        <taxon>Synechococcales</taxon>
        <taxon>Prochlorococcaceae</taxon>
        <taxon>Parasynechococcus</taxon>
        <taxon>Parasynechococcus marenigrum</taxon>
    </lineage>
</organism>
<dbReference type="EC" id="3.6.5.3" evidence="2"/>
<dbReference type="EMBL" id="BX569694">
    <property type="protein sequence ID" value="CAE08653.1"/>
    <property type="molecule type" value="Genomic_DNA"/>
</dbReference>
<dbReference type="RefSeq" id="WP_011128994.1">
    <property type="nucleotide sequence ID" value="NC_005070.1"/>
</dbReference>
<dbReference type="SMR" id="Q7U4D1"/>
<dbReference type="STRING" id="84588.SYNW2138"/>
<dbReference type="KEGG" id="syw:SYNW2138"/>
<dbReference type="eggNOG" id="COG0050">
    <property type="taxonomic scope" value="Bacteria"/>
</dbReference>
<dbReference type="HOGENOM" id="CLU_007265_0_1_3"/>
<dbReference type="Proteomes" id="UP000001422">
    <property type="component" value="Chromosome"/>
</dbReference>
<dbReference type="GO" id="GO:0005829">
    <property type="term" value="C:cytosol"/>
    <property type="evidence" value="ECO:0007669"/>
    <property type="project" value="TreeGrafter"/>
</dbReference>
<dbReference type="GO" id="GO:0005525">
    <property type="term" value="F:GTP binding"/>
    <property type="evidence" value="ECO:0007669"/>
    <property type="project" value="UniProtKB-UniRule"/>
</dbReference>
<dbReference type="GO" id="GO:0003924">
    <property type="term" value="F:GTPase activity"/>
    <property type="evidence" value="ECO:0007669"/>
    <property type="project" value="InterPro"/>
</dbReference>
<dbReference type="GO" id="GO:0003746">
    <property type="term" value="F:translation elongation factor activity"/>
    <property type="evidence" value="ECO:0007669"/>
    <property type="project" value="UniProtKB-UniRule"/>
</dbReference>
<dbReference type="CDD" id="cd01884">
    <property type="entry name" value="EF_Tu"/>
    <property type="match status" value="1"/>
</dbReference>
<dbReference type="CDD" id="cd03697">
    <property type="entry name" value="EFTU_II"/>
    <property type="match status" value="1"/>
</dbReference>
<dbReference type="CDD" id="cd03707">
    <property type="entry name" value="EFTU_III"/>
    <property type="match status" value="1"/>
</dbReference>
<dbReference type="FunFam" id="2.40.30.10:FF:000001">
    <property type="entry name" value="Elongation factor Tu"/>
    <property type="match status" value="1"/>
</dbReference>
<dbReference type="FunFam" id="2.40.30.10:FF:000046">
    <property type="entry name" value="Elongation factor Tu"/>
    <property type="match status" value="1"/>
</dbReference>
<dbReference type="FunFam" id="3.40.50.300:FF:000003">
    <property type="entry name" value="Elongation factor Tu"/>
    <property type="match status" value="1"/>
</dbReference>
<dbReference type="Gene3D" id="3.40.50.300">
    <property type="entry name" value="P-loop containing nucleotide triphosphate hydrolases"/>
    <property type="match status" value="1"/>
</dbReference>
<dbReference type="Gene3D" id="2.40.30.10">
    <property type="entry name" value="Translation factors"/>
    <property type="match status" value="2"/>
</dbReference>
<dbReference type="HAMAP" id="MF_00118_B">
    <property type="entry name" value="EF_Tu_B"/>
    <property type="match status" value="1"/>
</dbReference>
<dbReference type="InterPro" id="IPR041709">
    <property type="entry name" value="EF-Tu_GTP-bd"/>
</dbReference>
<dbReference type="InterPro" id="IPR050055">
    <property type="entry name" value="EF-Tu_GTPase"/>
</dbReference>
<dbReference type="InterPro" id="IPR004161">
    <property type="entry name" value="EFTu-like_2"/>
</dbReference>
<dbReference type="InterPro" id="IPR033720">
    <property type="entry name" value="EFTU_2"/>
</dbReference>
<dbReference type="InterPro" id="IPR031157">
    <property type="entry name" value="G_TR_CS"/>
</dbReference>
<dbReference type="InterPro" id="IPR027417">
    <property type="entry name" value="P-loop_NTPase"/>
</dbReference>
<dbReference type="InterPro" id="IPR005225">
    <property type="entry name" value="Small_GTP-bd"/>
</dbReference>
<dbReference type="InterPro" id="IPR000795">
    <property type="entry name" value="T_Tr_GTP-bd_dom"/>
</dbReference>
<dbReference type="InterPro" id="IPR009000">
    <property type="entry name" value="Transl_B-barrel_sf"/>
</dbReference>
<dbReference type="InterPro" id="IPR009001">
    <property type="entry name" value="Transl_elong_EF1A/Init_IF2_C"/>
</dbReference>
<dbReference type="InterPro" id="IPR004541">
    <property type="entry name" value="Transl_elong_EFTu/EF1A_bac/org"/>
</dbReference>
<dbReference type="InterPro" id="IPR004160">
    <property type="entry name" value="Transl_elong_EFTu/EF1A_C"/>
</dbReference>
<dbReference type="NCBIfam" id="TIGR00485">
    <property type="entry name" value="EF-Tu"/>
    <property type="match status" value="1"/>
</dbReference>
<dbReference type="NCBIfam" id="NF000766">
    <property type="entry name" value="PRK00049.1"/>
    <property type="match status" value="1"/>
</dbReference>
<dbReference type="NCBIfam" id="NF009372">
    <property type="entry name" value="PRK12735.1"/>
    <property type="match status" value="1"/>
</dbReference>
<dbReference type="NCBIfam" id="NF009373">
    <property type="entry name" value="PRK12736.1"/>
    <property type="match status" value="1"/>
</dbReference>
<dbReference type="NCBIfam" id="TIGR00231">
    <property type="entry name" value="small_GTP"/>
    <property type="match status" value="1"/>
</dbReference>
<dbReference type="PANTHER" id="PTHR43721:SF22">
    <property type="entry name" value="ELONGATION FACTOR TU, MITOCHONDRIAL"/>
    <property type="match status" value="1"/>
</dbReference>
<dbReference type="PANTHER" id="PTHR43721">
    <property type="entry name" value="ELONGATION FACTOR TU-RELATED"/>
    <property type="match status" value="1"/>
</dbReference>
<dbReference type="Pfam" id="PF00009">
    <property type="entry name" value="GTP_EFTU"/>
    <property type="match status" value="1"/>
</dbReference>
<dbReference type="Pfam" id="PF03144">
    <property type="entry name" value="GTP_EFTU_D2"/>
    <property type="match status" value="1"/>
</dbReference>
<dbReference type="Pfam" id="PF03143">
    <property type="entry name" value="GTP_EFTU_D3"/>
    <property type="match status" value="1"/>
</dbReference>
<dbReference type="PRINTS" id="PR00315">
    <property type="entry name" value="ELONGATNFCT"/>
</dbReference>
<dbReference type="SUPFAM" id="SSF50465">
    <property type="entry name" value="EF-Tu/eEF-1alpha/eIF2-gamma C-terminal domain"/>
    <property type="match status" value="1"/>
</dbReference>
<dbReference type="SUPFAM" id="SSF52540">
    <property type="entry name" value="P-loop containing nucleoside triphosphate hydrolases"/>
    <property type="match status" value="1"/>
</dbReference>
<dbReference type="SUPFAM" id="SSF50447">
    <property type="entry name" value="Translation proteins"/>
    <property type="match status" value="1"/>
</dbReference>
<dbReference type="PROSITE" id="PS00301">
    <property type="entry name" value="G_TR_1"/>
    <property type="match status" value="1"/>
</dbReference>
<dbReference type="PROSITE" id="PS51722">
    <property type="entry name" value="G_TR_2"/>
    <property type="match status" value="1"/>
</dbReference>
<accession>Q7U4D1</accession>
<comment type="function">
    <text evidence="2">GTP hydrolase that promotes the GTP-dependent binding of aminoacyl-tRNA to the A-site of ribosomes during protein biosynthesis.</text>
</comment>
<comment type="catalytic activity">
    <reaction evidence="2">
        <text>GTP + H2O = GDP + phosphate + H(+)</text>
        <dbReference type="Rhea" id="RHEA:19669"/>
        <dbReference type="ChEBI" id="CHEBI:15377"/>
        <dbReference type="ChEBI" id="CHEBI:15378"/>
        <dbReference type="ChEBI" id="CHEBI:37565"/>
        <dbReference type="ChEBI" id="CHEBI:43474"/>
        <dbReference type="ChEBI" id="CHEBI:58189"/>
        <dbReference type="EC" id="3.6.5.3"/>
    </reaction>
    <physiologicalReaction direction="left-to-right" evidence="2">
        <dbReference type="Rhea" id="RHEA:19670"/>
    </physiologicalReaction>
</comment>
<comment type="subunit">
    <text evidence="2">Monomer.</text>
</comment>
<comment type="subcellular location">
    <subcellularLocation>
        <location evidence="2">Cytoplasm</location>
    </subcellularLocation>
</comment>
<comment type="similarity">
    <text evidence="2">Belongs to the TRAFAC class translation factor GTPase superfamily. Classic translation factor GTPase family. EF-Tu/EF-1A subfamily.</text>
</comment>